<feature type="signal peptide" evidence="1">
    <location>
        <begin position="1"/>
        <end position="21"/>
    </location>
</feature>
<feature type="chain" id="PRO_0000315325" description="Prostate and testis expressed protein 1">
    <location>
        <begin position="22"/>
        <end position="126"/>
    </location>
</feature>
<feature type="domain" description="UPAR/Ly6" evidence="5">
    <location>
        <begin position="46"/>
        <end position="125"/>
    </location>
</feature>
<feature type="disulfide bond" evidence="1">
    <location>
        <begin position="48"/>
        <end position="75"/>
    </location>
</feature>
<feature type="disulfide bond" evidence="1">
    <location>
        <begin position="51"/>
        <end position="60"/>
    </location>
</feature>
<feature type="disulfide bond" evidence="1">
    <location>
        <begin position="67"/>
        <end position="94"/>
    </location>
</feature>
<feature type="disulfide bond" evidence="1">
    <location>
        <begin position="98"/>
        <end position="115"/>
    </location>
</feature>
<feature type="splice variant" id="VSP_030533" description="In isoform 2." evidence="4">
    <location>
        <begin position="30"/>
        <end position="41"/>
    </location>
</feature>
<feature type="sequence variant" id="VAR_052699" description="In dbSNP:rs537916.">
    <original>V</original>
    <variation>I</variation>
    <location>
        <position position="46"/>
    </location>
</feature>
<feature type="sequence variant" id="VAR_052700" description="In dbSNP:rs2114084." evidence="3">
    <original>Q</original>
    <variation>R</variation>
    <location>
        <position position="47"/>
    </location>
</feature>
<name>PATE1_HUMAN</name>
<gene>
    <name type="primary">PATE1</name>
    <name type="synonym">PATE</name>
</gene>
<reference key="1">
    <citation type="journal article" date="2002" name="Proc. Natl. Acad. Sci. U.S.A.">
        <title>PATE, a gene expressed in prostate cancer, normal prostate, and testis, identified by a functional genomic approach.</title>
        <authorList>
            <person name="Bera T.K."/>
            <person name="Maitra R."/>
            <person name="Iavarone C."/>
            <person name="Salvatore G."/>
            <person name="Kumar V."/>
            <person name="Vincent J.J."/>
            <person name="Sathyanarayana B.K."/>
            <person name="Duray P."/>
            <person name="Lee B.K."/>
            <person name="Pastan I."/>
        </authorList>
    </citation>
    <scope>NUCLEOTIDE SEQUENCE [MRNA] (ISOFORM 1)</scope>
    <scope>TISSUE SPECIFICITY</scope>
</reference>
<reference key="2">
    <citation type="submission" date="2005-07" db="EMBL/GenBank/DDBJ databases">
        <authorList>
            <person name="Mural R.J."/>
            <person name="Istrail S."/>
            <person name="Sutton G.G."/>
            <person name="Florea L."/>
            <person name="Halpern A.L."/>
            <person name="Mobarry C.M."/>
            <person name="Lippert R."/>
            <person name="Walenz B."/>
            <person name="Shatkay H."/>
            <person name="Dew I."/>
            <person name="Miller J.R."/>
            <person name="Flanigan M.J."/>
            <person name="Edwards N.J."/>
            <person name="Bolanos R."/>
            <person name="Fasulo D."/>
            <person name="Halldorsson B.V."/>
            <person name="Hannenhalli S."/>
            <person name="Turner R."/>
            <person name="Yooseph S."/>
            <person name="Lu F."/>
            <person name="Nusskern D.R."/>
            <person name="Shue B.C."/>
            <person name="Zheng X.H."/>
            <person name="Zhong F."/>
            <person name="Delcher A.L."/>
            <person name="Huson D.H."/>
            <person name="Kravitz S.A."/>
            <person name="Mouchard L."/>
            <person name="Reinert K."/>
            <person name="Remington K.A."/>
            <person name="Clark A.G."/>
            <person name="Waterman M.S."/>
            <person name="Eichler E.E."/>
            <person name="Adams M.D."/>
            <person name="Hunkapiller M.W."/>
            <person name="Myers E.W."/>
            <person name="Venter J.C."/>
        </authorList>
    </citation>
    <scope>NUCLEOTIDE SEQUENCE [LARGE SCALE GENOMIC DNA]</scope>
</reference>
<reference key="3">
    <citation type="journal article" date="2004" name="Genome Res.">
        <title>The status, quality, and expansion of the NIH full-length cDNA project: the Mammalian Gene Collection (MGC).</title>
        <authorList>
            <consortium name="The MGC Project Team"/>
        </authorList>
    </citation>
    <scope>NUCLEOTIDE SEQUENCE [LARGE SCALE MRNA] (ISOFORMS 1 AND 2)</scope>
    <scope>VARIANT ARG-47</scope>
    <source>
        <tissue>Brain</tissue>
    </source>
</reference>
<evidence type="ECO:0000255" key="1"/>
<evidence type="ECO:0000269" key="2">
    <source>
    </source>
</evidence>
<evidence type="ECO:0000269" key="3">
    <source>
    </source>
</evidence>
<evidence type="ECO:0000303" key="4">
    <source>
    </source>
</evidence>
<evidence type="ECO:0000305" key="5"/>
<organism>
    <name type="scientific">Homo sapiens</name>
    <name type="common">Human</name>
    <dbReference type="NCBI Taxonomy" id="9606"/>
    <lineage>
        <taxon>Eukaryota</taxon>
        <taxon>Metazoa</taxon>
        <taxon>Chordata</taxon>
        <taxon>Craniata</taxon>
        <taxon>Vertebrata</taxon>
        <taxon>Euteleostomi</taxon>
        <taxon>Mammalia</taxon>
        <taxon>Eutheria</taxon>
        <taxon>Euarchontoglires</taxon>
        <taxon>Primates</taxon>
        <taxon>Haplorrhini</taxon>
        <taxon>Catarrhini</taxon>
        <taxon>Hominidae</taxon>
        <taxon>Homo</taxon>
    </lineage>
</organism>
<proteinExistence type="evidence at protein level"/>
<keyword id="KW-0025">Alternative splicing</keyword>
<keyword id="KW-1015">Disulfide bond</keyword>
<keyword id="KW-1267">Proteomics identification</keyword>
<keyword id="KW-1185">Reference proteome</keyword>
<keyword id="KW-0964">Secreted</keyword>
<keyword id="KW-0732">Signal</keyword>
<sequence>MDKSLLLELPILLCCFRALSGSLSMRNDAVNEIVAVKNNFPVIEIVQCRMCHLQFPGEKCSRGRGICTATTEEACMVGRMFKRDGNPWLTFMGCLKNCADVKGIRWSVYLVNFRCCRSHDLCNEDL</sequence>
<accession>Q8WXA2</accession>
<accession>Q3KNX2</accession>
<dbReference type="EMBL" id="AF462605">
    <property type="protein sequence ID" value="AAL68667.1"/>
    <property type="molecule type" value="mRNA"/>
</dbReference>
<dbReference type="EMBL" id="CH471065">
    <property type="protein sequence ID" value="EAW67661.1"/>
    <property type="molecule type" value="Genomic_DNA"/>
</dbReference>
<dbReference type="EMBL" id="BC039863">
    <property type="protein sequence ID" value="AAH39863.1"/>
    <property type="molecule type" value="mRNA"/>
</dbReference>
<dbReference type="EMBL" id="BC107044">
    <property type="protein sequence ID" value="AAI07045.1"/>
    <property type="molecule type" value="mRNA"/>
</dbReference>
<dbReference type="CCDS" id="CCDS8464.1">
    <molecule id="Q8WXA2-1"/>
</dbReference>
<dbReference type="RefSeq" id="NP_612151.1">
    <molecule id="Q8WXA2-1"/>
    <property type="nucleotide sequence ID" value="NM_138294.3"/>
</dbReference>
<dbReference type="SMR" id="Q8WXA2"/>
<dbReference type="BioGRID" id="127747">
    <property type="interactions" value="115"/>
</dbReference>
<dbReference type="FunCoup" id="Q8WXA2">
    <property type="interactions" value="379"/>
</dbReference>
<dbReference type="IntAct" id="Q8WXA2">
    <property type="interactions" value="48"/>
</dbReference>
<dbReference type="STRING" id="9606.ENSP00000307164"/>
<dbReference type="iPTMnet" id="Q8WXA2"/>
<dbReference type="PhosphoSitePlus" id="Q8WXA2"/>
<dbReference type="BioMuta" id="PATE1"/>
<dbReference type="DMDM" id="74730987"/>
<dbReference type="MassIVE" id="Q8WXA2"/>
<dbReference type="PaxDb" id="9606-ENSP00000307164"/>
<dbReference type="PeptideAtlas" id="Q8WXA2"/>
<dbReference type="ProteomicsDB" id="74992">
    <molecule id="Q8WXA2-1"/>
</dbReference>
<dbReference type="ProteomicsDB" id="74993">
    <molecule id="Q8WXA2-2"/>
</dbReference>
<dbReference type="Antibodypedia" id="67054">
    <property type="antibodies" value="59 antibodies from 14 providers"/>
</dbReference>
<dbReference type="DNASU" id="160065"/>
<dbReference type="Ensembl" id="ENST00000305738.10">
    <molecule id="Q8WXA2-1"/>
    <property type="protein sequence ID" value="ENSP00000307164.4"/>
    <property type="gene ID" value="ENSG00000171053.10"/>
</dbReference>
<dbReference type="Ensembl" id="ENST00000437148.2">
    <molecule id="Q8WXA2-2"/>
    <property type="protein sequence ID" value="ENSP00000396056.2"/>
    <property type="gene ID" value="ENSG00000171053.10"/>
</dbReference>
<dbReference type="GeneID" id="160065"/>
<dbReference type="KEGG" id="hsa:160065"/>
<dbReference type="MANE-Select" id="ENST00000305738.10">
    <property type="protein sequence ID" value="ENSP00000307164.4"/>
    <property type="RefSeq nucleotide sequence ID" value="NM_138294.3"/>
    <property type="RefSeq protein sequence ID" value="NP_612151.1"/>
</dbReference>
<dbReference type="UCSC" id="uc001qct.4">
    <molecule id="Q8WXA2-1"/>
    <property type="organism name" value="human"/>
</dbReference>
<dbReference type="AGR" id="HGNC:24664"/>
<dbReference type="CTD" id="160065"/>
<dbReference type="DisGeNET" id="160065"/>
<dbReference type="GeneCards" id="PATE1"/>
<dbReference type="HGNC" id="HGNC:24664">
    <property type="gene designation" value="PATE1"/>
</dbReference>
<dbReference type="HPA" id="ENSG00000171053">
    <property type="expression patterns" value="Tissue enriched (epididymis)"/>
</dbReference>
<dbReference type="MIM" id="606861">
    <property type="type" value="gene"/>
</dbReference>
<dbReference type="neXtProt" id="NX_Q8WXA2"/>
<dbReference type="OpenTargets" id="ENSG00000171053"/>
<dbReference type="PharmGKB" id="PA164724368"/>
<dbReference type="VEuPathDB" id="HostDB:ENSG00000171053"/>
<dbReference type="eggNOG" id="ENOG502TDVG">
    <property type="taxonomic scope" value="Eukaryota"/>
</dbReference>
<dbReference type="GeneTree" id="ENSGT00390000012586"/>
<dbReference type="HOGENOM" id="CLU_170458_0_0_1"/>
<dbReference type="InParanoid" id="Q8WXA2"/>
<dbReference type="OMA" id="CANVENI"/>
<dbReference type="OrthoDB" id="9804658at2759"/>
<dbReference type="PAN-GO" id="Q8WXA2">
    <property type="GO annotations" value="0 GO annotations based on evolutionary models"/>
</dbReference>
<dbReference type="PhylomeDB" id="Q8WXA2"/>
<dbReference type="TreeFam" id="TF337781"/>
<dbReference type="PathwayCommons" id="Q8WXA2"/>
<dbReference type="SignaLink" id="Q8WXA2"/>
<dbReference type="BioGRID-ORCS" id="160065">
    <property type="hits" value="6 hits in 1141 CRISPR screens"/>
</dbReference>
<dbReference type="GenomeRNAi" id="160065"/>
<dbReference type="Pharos" id="Q8WXA2">
    <property type="development level" value="Tbio"/>
</dbReference>
<dbReference type="PRO" id="PR:Q8WXA2"/>
<dbReference type="Proteomes" id="UP000005640">
    <property type="component" value="Chromosome 11"/>
</dbReference>
<dbReference type="RNAct" id="Q8WXA2">
    <property type="molecule type" value="protein"/>
</dbReference>
<dbReference type="Bgee" id="ENSG00000171053">
    <property type="expression patterns" value="Expressed in corpus epididymis and 15 other cell types or tissues"/>
</dbReference>
<dbReference type="GO" id="GO:0005576">
    <property type="term" value="C:extracellular region"/>
    <property type="evidence" value="ECO:0007669"/>
    <property type="project" value="UniProtKB-SubCell"/>
</dbReference>
<dbReference type="GO" id="GO:0030548">
    <property type="term" value="F:acetylcholine receptor regulator activity"/>
    <property type="evidence" value="ECO:0007669"/>
    <property type="project" value="Ensembl"/>
</dbReference>
<dbReference type="CDD" id="cd23577">
    <property type="entry name" value="TFP_LU_ECD_PATE1"/>
    <property type="match status" value="1"/>
</dbReference>
<dbReference type="InterPro" id="IPR016054">
    <property type="entry name" value="LY6_UPA_recep-like"/>
</dbReference>
<dbReference type="Pfam" id="PF00021">
    <property type="entry name" value="UPAR_LY6"/>
    <property type="match status" value="1"/>
</dbReference>
<protein>
    <recommendedName>
        <fullName>Prostate and testis expressed protein 1</fullName>
    </recommendedName>
</protein>
<comment type="interaction">
    <interactant intactId="EBI-10277790">
        <id>Q8WXA2</id>
    </interactant>
    <interactant intactId="EBI-6509505">
        <id>Q0VD86</id>
        <label>INCA1</label>
    </interactant>
    <organismsDiffer>false</organismsDiffer>
    <experiments>3</experiments>
</comment>
<comment type="interaction">
    <interactant intactId="EBI-10277790">
        <id>Q8WXA2</id>
    </interactant>
    <interactant intactId="EBI-307352">
        <id>Q04864</id>
        <label>REL</label>
    </interactant>
    <organismsDiffer>false</organismsDiffer>
    <experiments>3</experiments>
</comment>
<comment type="interaction">
    <interactant intactId="EBI-10277790">
        <id>Q8WXA2</id>
    </interactant>
    <interactant intactId="EBI-2826300">
        <id>Q53GC0</id>
        <label>SERTAD1</label>
    </interactant>
    <organismsDiffer>false</organismsDiffer>
    <experiments>3</experiments>
</comment>
<comment type="interaction">
    <interactant intactId="EBI-10277790">
        <id>Q8WXA2</id>
    </interactant>
    <interactant intactId="EBI-533224">
        <id>P15884</id>
        <label>TCF4</label>
    </interactant>
    <organismsDiffer>false</organismsDiffer>
    <experiments>3</experiments>
</comment>
<comment type="interaction">
    <interactant intactId="EBI-12837654">
        <id>Q8WXA2-2</id>
    </interactant>
    <interactant intactId="EBI-13636688">
        <id>P15884-3</id>
        <label>TCF4</label>
    </interactant>
    <organismsDiffer>false</organismsDiffer>
    <experiments>3</experiments>
</comment>
<comment type="subcellular location">
    <subcellularLocation>
        <location evidence="5">Secreted</location>
    </subcellularLocation>
</comment>
<comment type="alternative products">
    <event type="alternative splicing"/>
    <isoform>
        <id>Q8WXA2-1</id>
        <name>1</name>
        <sequence type="displayed"/>
    </isoform>
    <isoform>
        <id>Q8WXA2-2</id>
        <name>2</name>
        <sequence type="described" ref="VSP_030533"/>
    </isoform>
</comment>
<comment type="tissue specificity">
    <text evidence="2">Expressed specifically in prostate cancer, normal prostate, and testis. Expressed in the epithelial cells of the prostate cancer and normal prostate tissues.</text>
</comment>
<comment type="similarity">
    <text evidence="5">Belongs to the PATE family.</text>
</comment>